<accession>Q31FE7</accession>
<evidence type="ECO:0000255" key="1">
    <source>
        <dbReference type="HAMAP-Rule" id="MF_01537"/>
    </source>
</evidence>
<proteinExistence type="inferred from homology"/>
<sequence length="104" mass="11243">MSQFENVTVVKAANVYYDGKVSSRTVLFADGSKKTLGLLLPGEYEFGTEAAEIMEMLAGDVDVLLPGETKWQSLSAGESFNVPANSKFGINVKTVADYCCSYID</sequence>
<keyword id="KW-0328">Glycosyltransferase</keyword>
<keyword id="KW-0808">Transferase</keyword>
<organism>
    <name type="scientific">Hydrogenovibrio crunogenus (strain DSM 25203 / XCL-2)</name>
    <name type="common">Thiomicrospira crunogena</name>
    <dbReference type="NCBI Taxonomy" id="317025"/>
    <lineage>
        <taxon>Bacteria</taxon>
        <taxon>Pseudomonadati</taxon>
        <taxon>Pseudomonadota</taxon>
        <taxon>Gammaproteobacteria</taxon>
        <taxon>Thiotrichales</taxon>
        <taxon>Piscirickettsiaceae</taxon>
        <taxon>Hydrogenovibrio</taxon>
    </lineage>
</organism>
<dbReference type="EC" id="2.4.2.1" evidence="1"/>
<dbReference type="EC" id="2.4.2.2" evidence="1"/>
<dbReference type="EMBL" id="CP000109">
    <property type="protein sequence ID" value="ABB42126.1"/>
    <property type="molecule type" value="Genomic_DNA"/>
</dbReference>
<dbReference type="SMR" id="Q31FE7"/>
<dbReference type="STRING" id="317025.Tcr_1534"/>
<dbReference type="KEGG" id="tcx:Tcr_1534"/>
<dbReference type="eggNOG" id="COG3123">
    <property type="taxonomic scope" value="Bacteria"/>
</dbReference>
<dbReference type="HOGENOM" id="CLU_157874_1_0_6"/>
<dbReference type="OrthoDB" id="9793848at2"/>
<dbReference type="GO" id="GO:0005829">
    <property type="term" value="C:cytosol"/>
    <property type="evidence" value="ECO:0007669"/>
    <property type="project" value="TreeGrafter"/>
</dbReference>
<dbReference type="GO" id="GO:0047975">
    <property type="term" value="F:guanosine phosphorylase activity"/>
    <property type="evidence" value="ECO:0007669"/>
    <property type="project" value="UniProtKB-EC"/>
</dbReference>
<dbReference type="GO" id="GO:0004731">
    <property type="term" value="F:purine-nucleoside phosphorylase activity"/>
    <property type="evidence" value="ECO:0007669"/>
    <property type="project" value="UniProtKB-UniRule"/>
</dbReference>
<dbReference type="GO" id="GO:0009032">
    <property type="term" value="F:thymidine phosphorylase activity"/>
    <property type="evidence" value="ECO:0007669"/>
    <property type="project" value="UniProtKB-EC"/>
</dbReference>
<dbReference type="GO" id="GO:0004850">
    <property type="term" value="F:uridine phosphorylase activity"/>
    <property type="evidence" value="ECO:0007669"/>
    <property type="project" value="UniProtKB-EC"/>
</dbReference>
<dbReference type="CDD" id="cd20296">
    <property type="entry name" value="cupin_PpnP-like"/>
    <property type="match status" value="1"/>
</dbReference>
<dbReference type="FunFam" id="2.60.120.10:FF:000016">
    <property type="entry name" value="Pyrimidine/purine nucleoside phosphorylase"/>
    <property type="match status" value="1"/>
</dbReference>
<dbReference type="Gene3D" id="2.60.120.10">
    <property type="entry name" value="Jelly Rolls"/>
    <property type="match status" value="1"/>
</dbReference>
<dbReference type="HAMAP" id="MF_01537">
    <property type="entry name" value="Nucleos_phosphorylase_PpnP"/>
    <property type="match status" value="1"/>
</dbReference>
<dbReference type="InterPro" id="IPR009664">
    <property type="entry name" value="Ppnp"/>
</dbReference>
<dbReference type="InterPro" id="IPR014710">
    <property type="entry name" value="RmlC-like_jellyroll"/>
</dbReference>
<dbReference type="InterPro" id="IPR011051">
    <property type="entry name" value="RmlC_Cupin_sf"/>
</dbReference>
<dbReference type="PANTHER" id="PTHR36540">
    <property type="entry name" value="PYRIMIDINE/PURINE NUCLEOSIDE PHOSPHORYLASE"/>
    <property type="match status" value="1"/>
</dbReference>
<dbReference type="PANTHER" id="PTHR36540:SF1">
    <property type="entry name" value="PYRIMIDINE_PURINE NUCLEOSIDE PHOSPHORYLASE"/>
    <property type="match status" value="1"/>
</dbReference>
<dbReference type="Pfam" id="PF06865">
    <property type="entry name" value="Ppnp"/>
    <property type="match status" value="1"/>
</dbReference>
<dbReference type="SUPFAM" id="SSF51182">
    <property type="entry name" value="RmlC-like cupins"/>
    <property type="match status" value="1"/>
</dbReference>
<comment type="function">
    <text evidence="1">Catalyzes the phosphorolysis of diverse nucleosides, yielding D-ribose 1-phosphate and the respective free bases. Can use uridine, adenosine, guanosine, cytidine, thymidine, inosine and xanthosine as substrates. Also catalyzes the reverse reactions.</text>
</comment>
<comment type="catalytic activity">
    <reaction evidence="1">
        <text>a purine D-ribonucleoside + phosphate = a purine nucleobase + alpha-D-ribose 1-phosphate</text>
        <dbReference type="Rhea" id="RHEA:19805"/>
        <dbReference type="ChEBI" id="CHEBI:26386"/>
        <dbReference type="ChEBI" id="CHEBI:43474"/>
        <dbReference type="ChEBI" id="CHEBI:57720"/>
        <dbReference type="ChEBI" id="CHEBI:142355"/>
        <dbReference type="EC" id="2.4.2.1"/>
    </reaction>
</comment>
<comment type="catalytic activity">
    <reaction evidence="1">
        <text>adenosine + phosphate = alpha-D-ribose 1-phosphate + adenine</text>
        <dbReference type="Rhea" id="RHEA:27642"/>
        <dbReference type="ChEBI" id="CHEBI:16335"/>
        <dbReference type="ChEBI" id="CHEBI:16708"/>
        <dbReference type="ChEBI" id="CHEBI:43474"/>
        <dbReference type="ChEBI" id="CHEBI:57720"/>
        <dbReference type="EC" id="2.4.2.1"/>
    </reaction>
</comment>
<comment type="catalytic activity">
    <reaction evidence="1">
        <text>cytidine + phosphate = cytosine + alpha-D-ribose 1-phosphate</text>
        <dbReference type="Rhea" id="RHEA:52540"/>
        <dbReference type="ChEBI" id="CHEBI:16040"/>
        <dbReference type="ChEBI" id="CHEBI:17562"/>
        <dbReference type="ChEBI" id="CHEBI:43474"/>
        <dbReference type="ChEBI" id="CHEBI:57720"/>
        <dbReference type="EC" id="2.4.2.2"/>
    </reaction>
</comment>
<comment type="catalytic activity">
    <reaction evidence="1">
        <text>guanosine + phosphate = alpha-D-ribose 1-phosphate + guanine</text>
        <dbReference type="Rhea" id="RHEA:13233"/>
        <dbReference type="ChEBI" id="CHEBI:16235"/>
        <dbReference type="ChEBI" id="CHEBI:16750"/>
        <dbReference type="ChEBI" id="CHEBI:43474"/>
        <dbReference type="ChEBI" id="CHEBI:57720"/>
        <dbReference type="EC" id="2.4.2.1"/>
    </reaction>
</comment>
<comment type="catalytic activity">
    <reaction evidence="1">
        <text>inosine + phosphate = alpha-D-ribose 1-phosphate + hypoxanthine</text>
        <dbReference type="Rhea" id="RHEA:27646"/>
        <dbReference type="ChEBI" id="CHEBI:17368"/>
        <dbReference type="ChEBI" id="CHEBI:17596"/>
        <dbReference type="ChEBI" id="CHEBI:43474"/>
        <dbReference type="ChEBI" id="CHEBI:57720"/>
        <dbReference type="EC" id="2.4.2.1"/>
    </reaction>
</comment>
<comment type="catalytic activity">
    <reaction evidence="1">
        <text>thymidine + phosphate = 2-deoxy-alpha-D-ribose 1-phosphate + thymine</text>
        <dbReference type="Rhea" id="RHEA:16037"/>
        <dbReference type="ChEBI" id="CHEBI:17748"/>
        <dbReference type="ChEBI" id="CHEBI:17821"/>
        <dbReference type="ChEBI" id="CHEBI:43474"/>
        <dbReference type="ChEBI" id="CHEBI:57259"/>
        <dbReference type="EC" id="2.4.2.2"/>
    </reaction>
</comment>
<comment type="catalytic activity">
    <reaction evidence="1">
        <text>uridine + phosphate = alpha-D-ribose 1-phosphate + uracil</text>
        <dbReference type="Rhea" id="RHEA:24388"/>
        <dbReference type="ChEBI" id="CHEBI:16704"/>
        <dbReference type="ChEBI" id="CHEBI:17568"/>
        <dbReference type="ChEBI" id="CHEBI:43474"/>
        <dbReference type="ChEBI" id="CHEBI:57720"/>
        <dbReference type="EC" id="2.4.2.2"/>
    </reaction>
</comment>
<comment type="catalytic activity">
    <reaction evidence="1">
        <text>xanthosine + phosphate = alpha-D-ribose 1-phosphate + xanthine</text>
        <dbReference type="Rhea" id="RHEA:27638"/>
        <dbReference type="ChEBI" id="CHEBI:17712"/>
        <dbReference type="ChEBI" id="CHEBI:18107"/>
        <dbReference type="ChEBI" id="CHEBI:43474"/>
        <dbReference type="ChEBI" id="CHEBI:57720"/>
        <dbReference type="EC" id="2.4.2.1"/>
    </reaction>
</comment>
<comment type="similarity">
    <text evidence="1">Belongs to the nucleoside phosphorylase PpnP family.</text>
</comment>
<reference key="1">
    <citation type="journal article" date="2006" name="PLoS Biol.">
        <title>The genome of deep-sea vent chemolithoautotroph Thiomicrospira crunogena XCL-2.</title>
        <authorList>
            <person name="Scott K.M."/>
            <person name="Sievert S.M."/>
            <person name="Abril F.N."/>
            <person name="Ball L.A."/>
            <person name="Barrett C.J."/>
            <person name="Blake R.A."/>
            <person name="Boller A.J."/>
            <person name="Chain P.S.G."/>
            <person name="Clark J.A."/>
            <person name="Davis C.R."/>
            <person name="Detter C."/>
            <person name="Do K.F."/>
            <person name="Dobrinski K.P."/>
            <person name="Faza B.I."/>
            <person name="Fitzpatrick K.A."/>
            <person name="Freyermuth S.K."/>
            <person name="Harmer T.L."/>
            <person name="Hauser L.J."/>
            <person name="Huegler M."/>
            <person name="Kerfeld C.A."/>
            <person name="Klotz M.G."/>
            <person name="Kong W.W."/>
            <person name="Land M."/>
            <person name="Lapidus A."/>
            <person name="Larimer F.W."/>
            <person name="Longo D.L."/>
            <person name="Lucas S."/>
            <person name="Malfatti S.A."/>
            <person name="Massey S.E."/>
            <person name="Martin D.D."/>
            <person name="McCuddin Z."/>
            <person name="Meyer F."/>
            <person name="Moore J.L."/>
            <person name="Ocampo L.H. Jr."/>
            <person name="Paul J.H."/>
            <person name="Paulsen I.T."/>
            <person name="Reep D.K."/>
            <person name="Ren Q."/>
            <person name="Ross R.L."/>
            <person name="Sato P.Y."/>
            <person name="Thomas P."/>
            <person name="Tinkham L.E."/>
            <person name="Zeruth G.T."/>
        </authorList>
    </citation>
    <scope>NUCLEOTIDE SEQUENCE [LARGE SCALE GENOMIC DNA]</scope>
    <source>
        <strain>DSM 25203 / XCL-2</strain>
    </source>
</reference>
<protein>
    <recommendedName>
        <fullName evidence="1">Pyrimidine/purine nucleoside phosphorylase</fullName>
        <ecNumber evidence="1">2.4.2.1</ecNumber>
        <ecNumber evidence="1">2.4.2.2</ecNumber>
    </recommendedName>
    <alternativeName>
        <fullName evidence="1">Adenosine phosphorylase</fullName>
    </alternativeName>
    <alternativeName>
        <fullName evidence="1">Cytidine phosphorylase</fullName>
    </alternativeName>
    <alternativeName>
        <fullName evidence="1">Guanosine phosphorylase</fullName>
    </alternativeName>
    <alternativeName>
        <fullName evidence="1">Inosine phosphorylase</fullName>
    </alternativeName>
    <alternativeName>
        <fullName evidence="1">Thymidine phosphorylase</fullName>
    </alternativeName>
    <alternativeName>
        <fullName evidence="1">Uridine phosphorylase</fullName>
    </alternativeName>
    <alternativeName>
        <fullName evidence="1">Xanthosine phosphorylase</fullName>
    </alternativeName>
</protein>
<gene>
    <name evidence="1" type="primary">ppnP</name>
    <name type="ordered locus">Tcr_1534</name>
</gene>
<feature type="chain" id="PRO_0000298733" description="Pyrimidine/purine nucleoside phosphorylase">
    <location>
        <begin position="1"/>
        <end position="104"/>
    </location>
</feature>
<name>PPNP_HYDCU</name>